<name>IRLS_BURPS</name>
<organism>
    <name type="scientific">Burkholderia pseudomallei (strain K96243)</name>
    <dbReference type="NCBI Taxonomy" id="272560"/>
    <lineage>
        <taxon>Bacteria</taxon>
        <taxon>Pseudomonadati</taxon>
        <taxon>Pseudomonadota</taxon>
        <taxon>Betaproteobacteria</taxon>
        <taxon>Burkholderiales</taxon>
        <taxon>Burkholderiaceae</taxon>
        <taxon>Burkholderia</taxon>
        <taxon>pseudomallei group</taxon>
    </lineage>
</organism>
<protein>
    <recommendedName>
        <fullName>Sensor protein IrlS</fullName>
        <ecNumber>2.7.13.3</ecNumber>
    </recommendedName>
</protein>
<comment type="function">
    <text evidence="1">Member of the two-component regulatory system IrlR/IrlS. May be involved in invasion of eukaryotic cells and heavy-metal resistance. Probably activates IrlR by phosphorylation (By similarity).</text>
</comment>
<comment type="catalytic activity">
    <reaction>
        <text>ATP + protein L-histidine = ADP + protein N-phospho-L-histidine.</text>
        <dbReference type="EC" id="2.7.13.3"/>
    </reaction>
</comment>
<comment type="subcellular location">
    <subcellularLocation>
        <location evidence="5">Cell inner membrane</location>
        <topology evidence="5">Multi-pass membrane protein</topology>
    </subcellularLocation>
</comment>
<reference key="1">
    <citation type="journal article" date="2004" name="Proc. Natl. Acad. Sci. U.S.A.">
        <title>Genomic plasticity of the causative agent of melioidosis, Burkholderia pseudomallei.</title>
        <authorList>
            <person name="Holden M.T.G."/>
            <person name="Titball R.W."/>
            <person name="Peacock S.J."/>
            <person name="Cerdeno-Tarraga A.-M."/>
            <person name="Atkins T."/>
            <person name="Crossman L.C."/>
            <person name="Pitt T."/>
            <person name="Churcher C."/>
            <person name="Mungall K.L."/>
            <person name="Bentley S.D."/>
            <person name="Sebaihia M."/>
            <person name="Thomson N.R."/>
            <person name="Bason N."/>
            <person name="Beacham I.R."/>
            <person name="Brooks K."/>
            <person name="Brown K.A."/>
            <person name="Brown N.F."/>
            <person name="Challis G.L."/>
            <person name="Cherevach I."/>
            <person name="Chillingworth T."/>
            <person name="Cronin A."/>
            <person name="Crossett B."/>
            <person name="Davis P."/>
            <person name="DeShazer D."/>
            <person name="Feltwell T."/>
            <person name="Fraser A."/>
            <person name="Hance Z."/>
            <person name="Hauser H."/>
            <person name="Holroyd S."/>
            <person name="Jagels K."/>
            <person name="Keith K.E."/>
            <person name="Maddison M."/>
            <person name="Moule S."/>
            <person name="Price C."/>
            <person name="Quail M.A."/>
            <person name="Rabbinowitsch E."/>
            <person name="Rutherford K."/>
            <person name="Sanders M."/>
            <person name="Simmonds M."/>
            <person name="Songsivilai S."/>
            <person name="Stevens K."/>
            <person name="Tumapa S."/>
            <person name="Vesaratchavest M."/>
            <person name="Whitehead S."/>
            <person name="Yeats C."/>
            <person name="Barrell B.G."/>
            <person name="Oyston P.C.F."/>
            <person name="Parkhill J."/>
        </authorList>
    </citation>
    <scope>NUCLEOTIDE SEQUENCE [LARGE SCALE GENOMIC DNA]</scope>
    <source>
        <strain>K96243</strain>
    </source>
</reference>
<keyword id="KW-0067">ATP-binding</keyword>
<keyword id="KW-0104">Cadmium</keyword>
<keyword id="KW-0997">Cell inner membrane</keyword>
<keyword id="KW-1003">Cell membrane</keyword>
<keyword id="KW-0418">Kinase</keyword>
<keyword id="KW-0472">Membrane</keyword>
<keyword id="KW-0547">Nucleotide-binding</keyword>
<keyword id="KW-0597">Phosphoprotein</keyword>
<keyword id="KW-1185">Reference proteome</keyword>
<keyword id="KW-0808">Transferase</keyword>
<keyword id="KW-0812">Transmembrane</keyword>
<keyword id="KW-1133">Transmembrane helix</keyword>
<keyword id="KW-0902">Two-component regulatory system</keyword>
<keyword id="KW-0862">Zinc</keyword>
<sequence>MIRRLLPRTLRARLTALIILSTAATLALSGVALYSALHNRLVGMSSYEMSATLAAMRTHLANVANVDDIPRKSDLWIDQLHGHQNLDLAIYDTDGRLRFATRGFVAPRPALGAPQTRVPASAAPAGATFSYLADDAPLRGGNPRTARIVVQYDGKNDHALLRAYAYTVVVIEVLAVVLTAALAYGIAMLGLSPLRRLVARAEQMSSSRLAQPLPELDTSGELKEMEHAFNAMLKRLDESFVRLSQFSSNLAHDMRTPLTNLLAEAQVALSKPRTADEYRDVIESSIDEYQRLSRMIEDMLFLARSDNAQSHLAIRTLDAAAQAERVAGYYEPMAEDADVRIVVRGKAEVRADALLYHRALSNLISNALNHAPRGSTITIECAQAADAATISVSDTGRGIEAPHRERIFERFYRVDPARHNSASGTGLGLAIVRSIMENHGGTCGVDSEPHVRTTFWLKFPAHAA</sequence>
<feature type="chain" id="PRO_0000074770" description="Sensor protein IrlS">
    <location>
        <begin position="1"/>
        <end position="464"/>
    </location>
</feature>
<feature type="topological domain" description="Periplasmic" evidence="2">
    <location>
        <begin position="1"/>
        <end position="13"/>
    </location>
</feature>
<feature type="transmembrane region" description="Helical" evidence="2">
    <location>
        <begin position="14"/>
        <end position="34"/>
    </location>
</feature>
<feature type="topological domain" description="Cytoplasmic" evidence="2">
    <location>
        <begin position="35"/>
        <end position="166"/>
    </location>
</feature>
<feature type="transmembrane region" description="Helical" evidence="2">
    <location>
        <begin position="167"/>
        <end position="187"/>
    </location>
</feature>
<feature type="topological domain" description="Periplasmic" evidence="2">
    <location>
        <begin position="188"/>
        <end position="464"/>
    </location>
</feature>
<feature type="domain" description="HAMP" evidence="3">
    <location>
        <begin position="188"/>
        <end position="241"/>
    </location>
</feature>
<feature type="domain" description="Histidine kinase" evidence="4">
    <location>
        <begin position="249"/>
        <end position="463"/>
    </location>
</feature>
<feature type="modified residue" description="Phosphohistidine; by autocatalysis" evidence="4">
    <location>
        <position position="252"/>
    </location>
</feature>
<evidence type="ECO:0000250" key="1"/>
<evidence type="ECO:0000255" key="2"/>
<evidence type="ECO:0000255" key="3">
    <source>
        <dbReference type="PROSITE-ProRule" id="PRU00102"/>
    </source>
</evidence>
<evidence type="ECO:0000255" key="4">
    <source>
        <dbReference type="PROSITE-ProRule" id="PRU00107"/>
    </source>
</evidence>
<evidence type="ECO:0000305" key="5"/>
<dbReference type="EC" id="2.7.13.3"/>
<dbReference type="EMBL" id="BX571966">
    <property type="protein sequence ID" value="CAH38500.1"/>
    <property type="molecule type" value="Genomic_DNA"/>
</dbReference>
<dbReference type="RefSeq" id="WP_009971776.1">
    <property type="nucleotide sequence ID" value="NZ_CP009537.1"/>
</dbReference>
<dbReference type="RefSeq" id="YP_111045.1">
    <property type="nucleotide sequence ID" value="NC_006351.1"/>
</dbReference>
<dbReference type="SMR" id="P0DMK6"/>
<dbReference type="STRING" id="272560.BPSS1039"/>
<dbReference type="KEGG" id="bps:BPSS1039"/>
<dbReference type="PATRIC" id="fig|272560.51.peg.4227"/>
<dbReference type="eggNOG" id="COG0642">
    <property type="taxonomic scope" value="Bacteria"/>
</dbReference>
<dbReference type="Proteomes" id="UP000000605">
    <property type="component" value="Chromosome 2"/>
</dbReference>
<dbReference type="GO" id="GO:0005886">
    <property type="term" value="C:plasma membrane"/>
    <property type="evidence" value="ECO:0007669"/>
    <property type="project" value="UniProtKB-SubCell"/>
</dbReference>
<dbReference type="GO" id="GO:0005524">
    <property type="term" value="F:ATP binding"/>
    <property type="evidence" value="ECO:0007669"/>
    <property type="project" value="UniProtKB-KW"/>
</dbReference>
<dbReference type="GO" id="GO:0000155">
    <property type="term" value="F:phosphorelay sensor kinase activity"/>
    <property type="evidence" value="ECO:0007669"/>
    <property type="project" value="InterPro"/>
</dbReference>
<dbReference type="CDD" id="cd06225">
    <property type="entry name" value="HAMP"/>
    <property type="match status" value="1"/>
</dbReference>
<dbReference type="CDD" id="cd00075">
    <property type="entry name" value="HATPase"/>
    <property type="match status" value="1"/>
</dbReference>
<dbReference type="CDD" id="cd00082">
    <property type="entry name" value="HisKA"/>
    <property type="match status" value="1"/>
</dbReference>
<dbReference type="FunFam" id="3.30.565.10:FF:000006">
    <property type="entry name" value="Sensor histidine kinase WalK"/>
    <property type="match status" value="1"/>
</dbReference>
<dbReference type="Gene3D" id="1.10.287.130">
    <property type="match status" value="1"/>
</dbReference>
<dbReference type="Gene3D" id="6.10.340.10">
    <property type="match status" value="1"/>
</dbReference>
<dbReference type="Gene3D" id="3.30.565.10">
    <property type="entry name" value="Histidine kinase-like ATPase, C-terminal domain"/>
    <property type="match status" value="1"/>
</dbReference>
<dbReference type="InterPro" id="IPR006290">
    <property type="entry name" value="CztS_silS_copS"/>
</dbReference>
<dbReference type="InterPro" id="IPR003660">
    <property type="entry name" value="HAMP_dom"/>
</dbReference>
<dbReference type="InterPro" id="IPR036890">
    <property type="entry name" value="HATPase_C_sf"/>
</dbReference>
<dbReference type="InterPro" id="IPR005467">
    <property type="entry name" value="His_kinase_dom"/>
</dbReference>
<dbReference type="InterPro" id="IPR003661">
    <property type="entry name" value="HisK_dim/P_dom"/>
</dbReference>
<dbReference type="InterPro" id="IPR036097">
    <property type="entry name" value="HisK_dim/P_sf"/>
</dbReference>
<dbReference type="InterPro" id="IPR004358">
    <property type="entry name" value="Sig_transdc_His_kin-like_C"/>
</dbReference>
<dbReference type="InterPro" id="IPR050428">
    <property type="entry name" value="TCS_sensor_his_kinase"/>
</dbReference>
<dbReference type="NCBIfam" id="TIGR01386">
    <property type="entry name" value="cztS_silS_copS"/>
    <property type="match status" value="1"/>
</dbReference>
<dbReference type="PANTHER" id="PTHR45436:SF15">
    <property type="entry name" value="SENSOR HISTIDINE KINASE CUSS"/>
    <property type="match status" value="1"/>
</dbReference>
<dbReference type="PANTHER" id="PTHR45436">
    <property type="entry name" value="SENSOR HISTIDINE KINASE YKOH"/>
    <property type="match status" value="1"/>
</dbReference>
<dbReference type="Pfam" id="PF00672">
    <property type="entry name" value="HAMP"/>
    <property type="match status" value="1"/>
</dbReference>
<dbReference type="Pfam" id="PF02518">
    <property type="entry name" value="HATPase_c"/>
    <property type="match status" value="1"/>
</dbReference>
<dbReference type="Pfam" id="PF00512">
    <property type="entry name" value="HisKA"/>
    <property type="match status" value="1"/>
</dbReference>
<dbReference type="PRINTS" id="PR00344">
    <property type="entry name" value="BCTRLSENSOR"/>
</dbReference>
<dbReference type="SMART" id="SM00304">
    <property type="entry name" value="HAMP"/>
    <property type="match status" value="1"/>
</dbReference>
<dbReference type="SMART" id="SM00387">
    <property type="entry name" value="HATPase_c"/>
    <property type="match status" value="1"/>
</dbReference>
<dbReference type="SMART" id="SM00388">
    <property type="entry name" value="HisKA"/>
    <property type="match status" value="1"/>
</dbReference>
<dbReference type="SUPFAM" id="SSF55874">
    <property type="entry name" value="ATPase domain of HSP90 chaperone/DNA topoisomerase II/histidine kinase"/>
    <property type="match status" value="1"/>
</dbReference>
<dbReference type="SUPFAM" id="SSF158472">
    <property type="entry name" value="HAMP domain-like"/>
    <property type="match status" value="1"/>
</dbReference>
<dbReference type="SUPFAM" id="SSF47384">
    <property type="entry name" value="Homodimeric domain of signal transducing histidine kinase"/>
    <property type="match status" value="1"/>
</dbReference>
<dbReference type="PROSITE" id="PS50885">
    <property type="entry name" value="HAMP"/>
    <property type="match status" value="1"/>
</dbReference>
<dbReference type="PROSITE" id="PS50109">
    <property type="entry name" value="HIS_KIN"/>
    <property type="match status" value="1"/>
</dbReference>
<accession>P0DMK6</accession>
<accession>O31396</accession>
<accession>Q63LH6</accession>
<proteinExistence type="inferred from homology"/>
<gene>
    <name type="primary">irlS</name>
    <name type="ordered locus">BPSS1039</name>
</gene>